<sequence length="497" mass="52036">MSGSTRTGSASVLLVGLSFRSAPVTMLEQATVADADLPKMQLSLVDNDVISESLVLSTCNRMEFYTVANAFHSGLDHVVDTIAQFSGLQTAELEPHLYVHYADSAAEHMLKVASGLDSMVIGEQQIIGQLRSAYQSANETGTVGRTLHDLTQRALRTGKRVHSETAIDSAGASMVSFALDQALRYIEPARALSAVVDDAPLSQPLAGHRALIIGAGAMASLASTHLGKLGIDHVTVANRTLSRAENLVNHARQAGVDASAVPLDGVTDCLSAVDIVVSATGAVGNVVTEQDVRAAVGAAGGVASVAGRRGTKVMIDLSMPADIEHSVAEIDGVKLLNIEELTTMAGDRVQDESPARAIVADELQSFLEQQRAQSVVPTVKALRQKAGEVMAEELMALERLTPDMSEADRAAVVKSMKRVVDKLLHTPTVQAKKLSAGGQQVSYPDALAALFNLPNGMVDSVTQPGQADSSAAQTAGTSARADQIPSAARVGRVVREA</sequence>
<dbReference type="EC" id="1.2.1.70" evidence="1"/>
<dbReference type="EMBL" id="CR931997">
    <property type="protein sequence ID" value="CAI38083.1"/>
    <property type="molecule type" value="Genomic_DNA"/>
</dbReference>
<dbReference type="RefSeq" id="WP_011274210.1">
    <property type="nucleotide sequence ID" value="NC_007164.1"/>
</dbReference>
<dbReference type="SMR" id="Q4JSX4"/>
<dbReference type="STRING" id="306537.jk1902"/>
<dbReference type="KEGG" id="cjk:jk1902"/>
<dbReference type="PATRIC" id="fig|306537.10.peg.1929"/>
<dbReference type="eggNOG" id="COG0373">
    <property type="taxonomic scope" value="Bacteria"/>
</dbReference>
<dbReference type="HOGENOM" id="CLU_035113_4_0_11"/>
<dbReference type="OrthoDB" id="110209at2"/>
<dbReference type="UniPathway" id="UPA00251">
    <property type="reaction ID" value="UER00316"/>
</dbReference>
<dbReference type="Proteomes" id="UP000000545">
    <property type="component" value="Chromosome"/>
</dbReference>
<dbReference type="GO" id="GO:0008883">
    <property type="term" value="F:glutamyl-tRNA reductase activity"/>
    <property type="evidence" value="ECO:0007669"/>
    <property type="project" value="UniProtKB-UniRule"/>
</dbReference>
<dbReference type="GO" id="GO:0050661">
    <property type="term" value="F:NADP binding"/>
    <property type="evidence" value="ECO:0007669"/>
    <property type="project" value="InterPro"/>
</dbReference>
<dbReference type="GO" id="GO:0019353">
    <property type="term" value="P:protoporphyrinogen IX biosynthetic process from glutamate"/>
    <property type="evidence" value="ECO:0007669"/>
    <property type="project" value="TreeGrafter"/>
</dbReference>
<dbReference type="CDD" id="cd05213">
    <property type="entry name" value="NAD_bind_Glutamyl_tRNA_reduct"/>
    <property type="match status" value="1"/>
</dbReference>
<dbReference type="FunFam" id="3.30.460.30:FF:000001">
    <property type="entry name" value="Glutamyl-tRNA reductase"/>
    <property type="match status" value="1"/>
</dbReference>
<dbReference type="Gene3D" id="3.30.460.30">
    <property type="entry name" value="Glutamyl-tRNA reductase, N-terminal domain"/>
    <property type="match status" value="1"/>
</dbReference>
<dbReference type="Gene3D" id="3.40.50.720">
    <property type="entry name" value="NAD(P)-binding Rossmann-like Domain"/>
    <property type="match status" value="1"/>
</dbReference>
<dbReference type="HAMAP" id="MF_00087">
    <property type="entry name" value="Glu_tRNA_reductase"/>
    <property type="match status" value="1"/>
</dbReference>
<dbReference type="InterPro" id="IPR000343">
    <property type="entry name" value="4pyrrol_synth_GluRdtase"/>
</dbReference>
<dbReference type="InterPro" id="IPR015896">
    <property type="entry name" value="4pyrrol_synth_GluRdtase_dimer"/>
</dbReference>
<dbReference type="InterPro" id="IPR015895">
    <property type="entry name" value="4pyrrol_synth_GluRdtase_N"/>
</dbReference>
<dbReference type="InterPro" id="IPR018214">
    <property type="entry name" value="GluRdtase_CS"/>
</dbReference>
<dbReference type="InterPro" id="IPR036453">
    <property type="entry name" value="GluRdtase_dimer_dom_sf"/>
</dbReference>
<dbReference type="InterPro" id="IPR036343">
    <property type="entry name" value="GluRdtase_N_sf"/>
</dbReference>
<dbReference type="InterPro" id="IPR036291">
    <property type="entry name" value="NAD(P)-bd_dom_sf"/>
</dbReference>
<dbReference type="InterPro" id="IPR006151">
    <property type="entry name" value="Shikm_DH/Glu-tRNA_Rdtase"/>
</dbReference>
<dbReference type="NCBIfam" id="TIGR01035">
    <property type="entry name" value="hemA"/>
    <property type="match status" value="1"/>
</dbReference>
<dbReference type="NCBIfam" id="NF000744">
    <property type="entry name" value="PRK00045.1-3"/>
    <property type="match status" value="1"/>
</dbReference>
<dbReference type="PANTHER" id="PTHR43013">
    <property type="entry name" value="GLUTAMYL-TRNA REDUCTASE"/>
    <property type="match status" value="1"/>
</dbReference>
<dbReference type="PANTHER" id="PTHR43013:SF1">
    <property type="entry name" value="GLUTAMYL-TRNA REDUCTASE"/>
    <property type="match status" value="1"/>
</dbReference>
<dbReference type="Pfam" id="PF00745">
    <property type="entry name" value="GlutR_dimer"/>
    <property type="match status" value="1"/>
</dbReference>
<dbReference type="Pfam" id="PF05201">
    <property type="entry name" value="GlutR_N"/>
    <property type="match status" value="1"/>
</dbReference>
<dbReference type="Pfam" id="PF01488">
    <property type="entry name" value="Shikimate_DH"/>
    <property type="match status" value="1"/>
</dbReference>
<dbReference type="PIRSF" id="PIRSF000445">
    <property type="entry name" value="4pyrrol_synth_GluRdtase"/>
    <property type="match status" value="1"/>
</dbReference>
<dbReference type="SUPFAM" id="SSF69742">
    <property type="entry name" value="Glutamyl tRNA-reductase catalytic, N-terminal domain"/>
    <property type="match status" value="1"/>
</dbReference>
<dbReference type="SUPFAM" id="SSF69075">
    <property type="entry name" value="Glutamyl tRNA-reductase dimerization domain"/>
    <property type="match status" value="1"/>
</dbReference>
<dbReference type="SUPFAM" id="SSF51735">
    <property type="entry name" value="NAD(P)-binding Rossmann-fold domains"/>
    <property type="match status" value="1"/>
</dbReference>
<dbReference type="PROSITE" id="PS00747">
    <property type="entry name" value="GLUTR"/>
    <property type="match status" value="1"/>
</dbReference>
<comment type="function">
    <text evidence="1">Catalyzes the NADPH-dependent reduction of glutamyl-tRNA(Glu) to glutamate 1-semialdehyde (GSA).</text>
</comment>
<comment type="catalytic activity">
    <reaction evidence="1">
        <text>(S)-4-amino-5-oxopentanoate + tRNA(Glu) + NADP(+) = L-glutamyl-tRNA(Glu) + NADPH + H(+)</text>
        <dbReference type="Rhea" id="RHEA:12344"/>
        <dbReference type="Rhea" id="RHEA-COMP:9663"/>
        <dbReference type="Rhea" id="RHEA-COMP:9680"/>
        <dbReference type="ChEBI" id="CHEBI:15378"/>
        <dbReference type="ChEBI" id="CHEBI:57501"/>
        <dbReference type="ChEBI" id="CHEBI:57783"/>
        <dbReference type="ChEBI" id="CHEBI:58349"/>
        <dbReference type="ChEBI" id="CHEBI:78442"/>
        <dbReference type="ChEBI" id="CHEBI:78520"/>
        <dbReference type="EC" id="1.2.1.70"/>
    </reaction>
</comment>
<comment type="pathway">
    <text evidence="1">Porphyrin-containing compound metabolism; protoporphyrin-IX biosynthesis; 5-aminolevulinate from L-glutamyl-tRNA(Glu): step 1/2.</text>
</comment>
<comment type="subunit">
    <text evidence="1">Homodimer.</text>
</comment>
<comment type="domain">
    <text evidence="1">Possesses an unusual extended V-shaped dimeric structure with each monomer consisting of three distinct domains arranged along a curved 'spinal' alpha-helix. The N-terminal catalytic domain specifically recognizes the glutamate moiety of the substrate. The second domain is the NADPH-binding domain, and the third C-terminal domain is responsible for dimerization.</text>
</comment>
<comment type="miscellaneous">
    <text evidence="1">During catalysis, the active site Cys acts as a nucleophile attacking the alpha-carbonyl group of tRNA-bound glutamate with the formation of a thioester intermediate between enzyme and glutamate, and the concomitant release of tRNA(Glu). The thioester intermediate is finally reduced by direct hydride transfer from NADPH, to form the product GSA.</text>
</comment>
<comment type="similarity">
    <text evidence="1">Belongs to the glutamyl-tRNA reductase family.</text>
</comment>
<proteinExistence type="inferred from homology"/>
<feature type="chain" id="PRO_5000134241" description="Glutamyl-tRNA reductase">
    <location>
        <begin position="1"/>
        <end position="497"/>
    </location>
</feature>
<feature type="region of interest" description="Disordered" evidence="2">
    <location>
        <begin position="461"/>
        <end position="486"/>
    </location>
</feature>
<feature type="compositionally biased region" description="Polar residues" evidence="2">
    <location>
        <begin position="461"/>
        <end position="477"/>
    </location>
</feature>
<feature type="active site" description="Nucleophile" evidence="1">
    <location>
        <position position="59"/>
    </location>
</feature>
<feature type="binding site" evidence="1">
    <location>
        <begin position="58"/>
        <end position="61"/>
    </location>
    <ligand>
        <name>substrate</name>
    </ligand>
</feature>
<feature type="binding site" evidence="1">
    <location>
        <position position="118"/>
    </location>
    <ligand>
        <name>substrate</name>
    </ligand>
</feature>
<feature type="binding site" evidence="1">
    <location>
        <begin position="123"/>
        <end position="125"/>
    </location>
    <ligand>
        <name>substrate</name>
    </ligand>
</feature>
<feature type="binding site" evidence="1">
    <location>
        <position position="129"/>
    </location>
    <ligand>
        <name>substrate</name>
    </ligand>
</feature>
<feature type="binding site" evidence="1">
    <location>
        <begin position="214"/>
        <end position="219"/>
    </location>
    <ligand>
        <name>NADP(+)</name>
        <dbReference type="ChEBI" id="CHEBI:58349"/>
    </ligand>
</feature>
<feature type="site" description="Important for activity" evidence="1">
    <location>
        <position position="108"/>
    </location>
</feature>
<reference key="1">
    <citation type="journal article" date="2005" name="J. Bacteriol.">
        <title>Complete genome sequence and analysis of the multiresistant nosocomial pathogen Corynebacterium jeikeium K411, a lipid-requiring bacterium of the human skin flora.</title>
        <authorList>
            <person name="Tauch A."/>
            <person name="Kaiser O."/>
            <person name="Hain T."/>
            <person name="Goesmann A."/>
            <person name="Weisshaar B."/>
            <person name="Albersmeier A."/>
            <person name="Bekel T."/>
            <person name="Bischoff N."/>
            <person name="Brune I."/>
            <person name="Chakraborty T."/>
            <person name="Kalinowski J."/>
            <person name="Meyer F."/>
            <person name="Rupp O."/>
            <person name="Schneiker S."/>
            <person name="Viehoever P."/>
            <person name="Puehler A."/>
        </authorList>
    </citation>
    <scope>NUCLEOTIDE SEQUENCE [LARGE SCALE GENOMIC DNA]</scope>
    <source>
        <strain>K411</strain>
    </source>
</reference>
<organism>
    <name type="scientific">Corynebacterium jeikeium (strain K411)</name>
    <dbReference type="NCBI Taxonomy" id="306537"/>
    <lineage>
        <taxon>Bacteria</taxon>
        <taxon>Bacillati</taxon>
        <taxon>Actinomycetota</taxon>
        <taxon>Actinomycetes</taxon>
        <taxon>Mycobacteriales</taxon>
        <taxon>Corynebacteriaceae</taxon>
        <taxon>Corynebacterium</taxon>
    </lineage>
</organism>
<evidence type="ECO:0000255" key="1">
    <source>
        <dbReference type="HAMAP-Rule" id="MF_00087"/>
    </source>
</evidence>
<evidence type="ECO:0000256" key="2">
    <source>
        <dbReference type="SAM" id="MobiDB-lite"/>
    </source>
</evidence>
<gene>
    <name evidence="1" type="primary">hemA</name>
    <name type="ordered locus">jk1902</name>
</gene>
<keyword id="KW-0521">NADP</keyword>
<keyword id="KW-0560">Oxidoreductase</keyword>
<keyword id="KW-0627">Porphyrin biosynthesis</keyword>
<keyword id="KW-1185">Reference proteome</keyword>
<accession>Q4JSX4</accession>
<protein>
    <recommendedName>
        <fullName evidence="1">Glutamyl-tRNA reductase</fullName>
        <shortName evidence="1">GluTR</shortName>
        <ecNumber evidence="1">1.2.1.70</ecNumber>
    </recommendedName>
</protein>
<name>HEM1_CORJK</name>